<dbReference type="EC" id="6.3.1.5" evidence="1"/>
<dbReference type="EMBL" id="CP000046">
    <property type="protein sequence ID" value="AAW36944.1"/>
    <property type="molecule type" value="Genomic_DNA"/>
</dbReference>
<dbReference type="RefSeq" id="WP_000040873.1">
    <property type="nucleotide sequence ID" value="NZ_JBGOFO010000006.1"/>
</dbReference>
<dbReference type="SMR" id="Q5HEK9"/>
<dbReference type="KEGG" id="sac:SACOL1974"/>
<dbReference type="HOGENOM" id="CLU_059327_3_0_9"/>
<dbReference type="BRENDA" id="6.3.1.5">
    <property type="organism ID" value="3352"/>
</dbReference>
<dbReference type="UniPathway" id="UPA00253">
    <property type="reaction ID" value="UER00333"/>
</dbReference>
<dbReference type="Proteomes" id="UP000000530">
    <property type="component" value="Chromosome"/>
</dbReference>
<dbReference type="GO" id="GO:0005737">
    <property type="term" value="C:cytoplasm"/>
    <property type="evidence" value="ECO:0007669"/>
    <property type="project" value="InterPro"/>
</dbReference>
<dbReference type="GO" id="GO:0005524">
    <property type="term" value="F:ATP binding"/>
    <property type="evidence" value="ECO:0007669"/>
    <property type="project" value="UniProtKB-UniRule"/>
</dbReference>
<dbReference type="GO" id="GO:0004359">
    <property type="term" value="F:glutaminase activity"/>
    <property type="evidence" value="ECO:0007669"/>
    <property type="project" value="InterPro"/>
</dbReference>
<dbReference type="GO" id="GO:0046872">
    <property type="term" value="F:metal ion binding"/>
    <property type="evidence" value="ECO:0007669"/>
    <property type="project" value="UniProtKB-KW"/>
</dbReference>
<dbReference type="GO" id="GO:0003952">
    <property type="term" value="F:NAD+ synthase (glutamine-hydrolyzing) activity"/>
    <property type="evidence" value="ECO:0007669"/>
    <property type="project" value="InterPro"/>
</dbReference>
<dbReference type="GO" id="GO:0008795">
    <property type="term" value="F:NAD+ synthase activity"/>
    <property type="evidence" value="ECO:0007669"/>
    <property type="project" value="UniProtKB-UniRule"/>
</dbReference>
<dbReference type="GO" id="GO:0009435">
    <property type="term" value="P:NAD biosynthetic process"/>
    <property type="evidence" value="ECO:0007669"/>
    <property type="project" value="UniProtKB-UniRule"/>
</dbReference>
<dbReference type="CDD" id="cd00553">
    <property type="entry name" value="NAD_synthase"/>
    <property type="match status" value="1"/>
</dbReference>
<dbReference type="FunFam" id="3.40.50.620:FF:000015">
    <property type="entry name" value="NH(3)-dependent NAD(+) synthetase"/>
    <property type="match status" value="1"/>
</dbReference>
<dbReference type="Gene3D" id="3.40.50.620">
    <property type="entry name" value="HUPs"/>
    <property type="match status" value="1"/>
</dbReference>
<dbReference type="HAMAP" id="MF_00193">
    <property type="entry name" value="NadE_ammonia_dep"/>
    <property type="match status" value="1"/>
</dbReference>
<dbReference type="InterPro" id="IPR022310">
    <property type="entry name" value="NAD/GMP_synthase"/>
</dbReference>
<dbReference type="InterPro" id="IPR003694">
    <property type="entry name" value="NAD_synthase"/>
</dbReference>
<dbReference type="InterPro" id="IPR022926">
    <property type="entry name" value="NH(3)-dep_NAD(+)_synth"/>
</dbReference>
<dbReference type="InterPro" id="IPR014729">
    <property type="entry name" value="Rossmann-like_a/b/a_fold"/>
</dbReference>
<dbReference type="NCBIfam" id="TIGR00552">
    <property type="entry name" value="nadE"/>
    <property type="match status" value="1"/>
</dbReference>
<dbReference type="NCBIfam" id="NF001979">
    <property type="entry name" value="PRK00768.1"/>
    <property type="match status" value="1"/>
</dbReference>
<dbReference type="PANTHER" id="PTHR23090">
    <property type="entry name" value="NH 3 /GLUTAMINE-DEPENDENT NAD + SYNTHETASE"/>
    <property type="match status" value="1"/>
</dbReference>
<dbReference type="PANTHER" id="PTHR23090:SF7">
    <property type="entry name" value="NH(3)-DEPENDENT NAD(+) SYNTHETASE"/>
    <property type="match status" value="1"/>
</dbReference>
<dbReference type="Pfam" id="PF02540">
    <property type="entry name" value="NAD_synthase"/>
    <property type="match status" value="1"/>
</dbReference>
<dbReference type="SUPFAM" id="SSF52402">
    <property type="entry name" value="Adenine nucleotide alpha hydrolases-like"/>
    <property type="match status" value="1"/>
</dbReference>
<name>NADE_STAAC</name>
<reference key="1">
    <citation type="journal article" date="2005" name="J. Bacteriol.">
        <title>Insights on evolution of virulence and resistance from the complete genome analysis of an early methicillin-resistant Staphylococcus aureus strain and a biofilm-producing methicillin-resistant Staphylococcus epidermidis strain.</title>
        <authorList>
            <person name="Gill S.R."/>
            <person name="Fouts D.E."/>
            <person name="Archer G.L."/>
            <person name="Mongodin E.F."/>
            <person name="DeBoy R.T."/>
            <person name="Ravel J."/>
            <person name="Paulsen I.T."/>
            <person name="Kolonay J.F."/>
            <person name="Brinkac L.M."/>
            <person name="Beanan M.J."/>
            <person name="Dodson R.J."/>
            <person name="Daugherty S.C."/>
            <person name="Madupu R."/>
            <person name="Angiuoli S.V."/>
            <person name="Durkin A.S."/>
            <person name="Haft D.H."/>
            <person name="Vamathevan J.J."/>
            <person name="Khouri H."/>
            <person name="Utterback T.R."/>
            <person name="Lee C."/>
            <person name="Dimitrov G."/>
            <person name="Jiang L."/>
            <person name="Qin H."/>
            <person name="Weidman J."/>
            <person name="Tran K."/>
            <person name="Kang K.H."/>
            <person name="Hance I.R."/>
            <person name="Nelson K.E."/>
            <person name="Fraser C.M."/>
        </authorList>
    </citation>
    <scope>NUCLEOTIDE SEQUENCE [LARGE SCALE GENOMIC DNA]</scope>
    <source>
        <strain>COL</strain>
    </source>
</reference>
<proteinExistence type="inferred from homology"/>
<feature type="chain" id="PRO_0000152194" description="NH(3)-dependent NAD(+) synthetase">
    <location>
        <begin position="1"/>
        <end position="273"/>
    </location>
</feature>
<feature type="binding site" evidence="1">
    <location>
        <begin position="47"/>
        <end position="54"/>
    </location>
    <ligand>
        <name>ATP</name>
        <dbReference type="ChEBI" id="CHEBI:30616"/>
    </ligand>
</feature>
<feature type="binding site" evidence="1">
    <location>
        <position position="53"/>
    </location>
    <ligand>
        <name>Mg(2+)</name>
        <dbReference type="ChEBI" id="CHEBI:18420"/>
    </ligand>
</feature>
<feature type="binding site" evidence="1">
    <location>
        <position position="139"/>
    </location>
    <ligand>
        <name>deamido-NAD(+)</name>
        <dbReference type="ChEBI" id="CHEBI:58437"/>
    </ligand>
</feature>
<feature type="binding site" evidence="1">
    <location>
        <position position="159"/>
    </location>
    <ligand>
        <name>ATP</name>
        <dbReference type="ChEBI" id="CHEBI:30616"/>
    </ligand>
</feature>
<feature type="binding site" evidence="1">
    <location>
        <position position="164"/>
    </location>
    <ligand>
        <name>Mg(2+)</name>
        <dbReference type="ChEBI" id="CHEBI:18420"/>
    </ligand>
</feature>
<feature type="binding site" evidence="1">
    <location>
        <position position="172"/>
    </location>
    <ligand>
        <name>deamido-NAD(+)</name>
        <dbReference type="ChEBI" id="CHEBI:58437"/>
    </ligand>
</feature>
<feature type="binding site" evidence="1">
    <location>
        <position position="179"/>
    </location>
    <ligand>
        <name>deamido-NAD(+)</name>
        <dbReference type="ChEBI" id="CHEBI:58437"/>
    </ligand>
</feature>
<feature type="binding site" evidence="1">
    <location>
        <position position="188"/>
    </location>
    <ligand>
        <name>ATP</name>
        <dbReference type="ChEBI" id="CHEBI:30616"/>
    </ligand>
</feature>
<feature type="binding site" evidence="1">
    <location>
        <position position="210"/>
    </location>
    <ligand>
        <name>ATP</name>
        <dbReference type="ChEBI" id="CHEBI:30616"/>
    </ligand>
</feature>
<feature type="binding site" evidence="1">
    <location>
        <begin position="259"/>
        <end position="260"/>
    </location>
    <ligand>
        <name>deamido-NAD(+)</name>
        <dbReference type="ChEBI" id="CHEBI:58437"/>
    </ligand>
</feature>
<sequence>MSKLQDVIVQEMKVKKRIDSAEEIMELKQFIKNYVQSHSFIKSLVLGISGGQDSTLVGKLVQMSVNELREEGIDCTFIAVKLPYGVQKDADEVEQALRFIEPDEIVTVNIKPAVDQSVQSLKEAGIVLTDFQKGNEKARERMKVQFSIASNRQGIVVGTDHSAENITGFYTKYGDGAADIAPIFGLNKRQGRQLLAYLGAPKELYEKTPTADLEDDKPQLPDEDALGVTYEAIDNYLEGKPVTPEEQKVIENHYIRNAHKRELAYTRYTWPKS</sequence>
<protein>
    <recommendedName>
        <fullName evidence="1">NH(3)-dependent NAD(+) synthetase</fullName>
        <ecNumber evidence="1">6.3.1.5</ecNumber>
    </recommendedName>
</protein>
<accession>Q5HEK9</accession>
<keyword id="KW-0067">ATP-binding</keyword>
<keyword id="KW-0436">Ligase</keyword>
<keyword id="KW-0460">Magnesium</keyword>
<keyword id="KW-0479">Metal-binding</keyword>
<keyword id="KW-0520">NAD</keyword>
<keyword id="KW-0547">Nucleotide-binding</keyword>
<gene>
    <name evidence="1" type="primary">nadE</name>
    <name type="ordered locus">SACOL1974</name>
</gene>
<evidence type="ECO:0000255" key="1">
    <source>
        <dbReference type="HAMAP-Rule" id="MF_00193"/>
    </source>
</evidence>
<organism>
    <name type="scientific">Staphylococcus aureus (strain COL)</name>
    <dbReference type="NCBI Taxonomy" id="93062"/>
    <lineage>
        <taxon>Bacteria</taxon>
        <taxon>Bacillati</taxon>
        <taxon>Bacillota</taxon>
        <taxon>Bacilli</taxon>
        <taxon>Bacillales</taxon>
        <taxon>Staphylococcaceae</taxon>
        <taxon>Staphylococcus</taxon>
    </lineage>
</organism>
<comment type="function">
    <text evidence="1">Catalyzes the ATP-dependent amidation of deamido-NAD to form NAD. Uses ammonia as a nitrogen source.</text>
</comment>
<comment type="catalytic activity">
    <reaction evidence="1">
        <text>deamido-NAD(+) + NH4(+) + ATP = AMP + diphosphate + NAD(+) + H(+)</text>
        <dbReference type="Rhea" id="RHEA:21188"/>
        <dbReference type="ChEBI" id="CHEBI:15378"/>
        <dbReference type="ChEBI" id="CHEBI:28938"/>
        <dbReference type="ChEBI" id="CHEBI:30616"/>
        <dbReference type="ChEBI" id="CHEBI:33019"/>
        <dbReference type="ChEBI" id="CHEBI:57540"/>
        <dbReference type="ChEBI" id="CHEBI:58437"/>
        <dbReference type="ChEBI" id="CHEBI:456215"/>
        <dbReference type="EC" id="6.3.1.5"/>
    </reaction>
</comment>
<comment type="pathway">
    <text evidence="1">Cofactor biosynthesis; NAD(+) biosynthesis; NAD(+) from deamido-NAD(+) (ammonia route): step 1/1.</text>
</comment>
<comment type="subunit">
    <text evidence="1">Homodimer.</text>
</comment>
<comment type="similarity">
    <text evidence="1">Belongs to the NAD synthetase family.</text>
</comment>